<proteinExistence type="inferred from homology"/>
<reference key="1">
    <citation type="journal article" date="2008" name="BMC Genomics">
        <title>Comparative genomic analysis of the gut bacterium Bifidobacterium longum reveals loci susceptible to deletion during pure culture growth.</title>
        <authorList>
            <person name="Lee J.H."/>
            <person name="Karamychev V.N."/>
            <person name="Kozyavkin S.A."/>
            <person name="Mills D."/>
            <person name="Pavlov A.R."/>
            <person name="Pavlova N.V."/>
            <person name="Polouchine N.N."/>
            <person name="Richardson P.M."/>
            <person name="Shakhova V.V."/>
            <person name="Slesarev A.I."/>
            <person name="Weimer B."/>
            <person name="O'Sullivan D.J."/>
        </authorList>
    </citation>
    <scope>NUCLEOTIDE SEQUENCE [LARGE SCALE GENOMIC DNA]</scope>
    <source>
        <strain>DJO10A</strain>
    </source>
</reference>
<name>RL3_BIFLD</name>
<protein>
    <recommendedName>
        <fullName evidence="1">Large ribosomal subunit protein uL3</fullName>
    </recommendedName>
    <alternativeName>
        <fullName evidence="2">50S ribosomal protein L3</fullName>
    </alternativeName>
</protein>
<sequence>MSNRKALLGKKLGMSQVWDENGFFVPVTLVDVSTNVVTAVKTEESDGYKAVQLGYGAIDPTKVTKPLAGHFAKAGVTPRRHLVEVRTDDVDQFEAGQELAADLFEEGAEVDVTGTTKGKGFAGTIKRWGFKSYRRTHGSHKNERRPGSVGACATPSRILKGKRMAGRMGHVTATTQNLTVVSADVENGILAIKGAIPGPKGGIVLVRSAVKGA</sequence>
<accession>B3DQ13</accession>
<feature type="chain" id="PRO_1000141828" description="Large ribosomal subunit protein uL3">
    <location>
        <begin position="1"/>
        <end position="213"/>
    </location>
</feature>
<evidence type="ECO:0000255" key="1">
    <source>
        <dbReference type="HAMAP-Rule" id="MF_01325"/>
    </source>
</evidence>
<evidence type="ECO:0000305" key="2"/>
<comment type="function">
    <text evidence="1">One of the primary rRNA binding proteins, it binds directly near the 3'-end of the 23S rRNA, where it nucleates assembly of the 50S subunit.</text>
</comment>
<comment type="subunit">
    <text evidence="1">Part of the 50S ribosomal subunit. Forms a cluster with proteins L14 and L19.</text>
</comment>
<comment type="similarity">
    <text evidence="1">Belongs to the universal ribosomal protein uL3 family.</text>
</comment>
<gene>
    <name evidence="1" type="primary">rplC</name>
    <name type="ordered locus">BLD_1707</name>
</gene>
<keyword id="KW-0687">Ribonucleoprotein</keyword>
<keyword id="KW-0689">Ribosomal protein</keyword>
<keyword id="KW-0694">RNA-binding</keyword>
<keyword id="KW-0699">rRNA-binding</keyword>
<dbReference type="EMBL" id="CP000605">
    <property type="protein sequence ID" value="ACD99152.1"/>
    <property type="molecule type" value="Genomic_DNA"/>
</dbReference>
<dbReference type="RefSeq" id="WP_007053031.1">
    <property type="nucleotide sequence ID" value="NZ_AABM02000025.1"/>
</dbReference>
<dbReference type="SMR" id="B3DQ13"/>
<dbReference type="GeneID" id="69578897"/>
<dbReference type="KEGG" id="blj:BLD_1707"/>
<dbReference type="HOGENOM" id="CLU_044142_4_1_11"/>
<dbReference type="Proteomes" id="UP000002419">
    <property type="component" value="Chromosome"/>
</dbReference>
<dbReference type="GO" id="GO:0022625">
    <property type="term" value="C:cytosolic large ribosomal subunit"/>
    <property type="evidence" value="ECO:0007669"/>
    <property type="project" value="TreeGrafter"/>
</dbReference>
<dbReference type="GO" id="GO:0019843">
    <property type="term" value="F:rRNA binding"/>
    <property type="evidence" value="ECO:0007669"/>
    <property type="project" value="UniProtKB-UniRule"/>
</dbReference>
<dbReference type="GO" id="GO:0003735">
    <property type="term" value="F:structural constituent of ribosome"/>
    <property type="evidence" value="ECO:0007669"/>
    <property type="project" value="InterPro"/>
</dbReference>
<dbReference type="GO" id="GO:0006412">
    <property type="term" value="P:translation"/>
    <property type="evidence" value="ECO:0007669"/>
    <property type="project" value="UniProtKB-UniRule"/>
</dbReference>
<dbReference type="FunFam" id="2.40.30.10:FF:000004">
    <property type="entry name" value="50S ribosomal protein L3"/>
    <property type="match status" value="1"/>
</dbReference>
<dbReference type="FunFam" id="3.30.160.810:FF:000001">
    <property type="entry name" value="50S ribosomal protein L3"/>
    <property type="match status" value="1"/>
</dbReference>
<dbReference type="Gene3D" id="3.30.160.810">
    <property type="match status" value="1"/>
</dbReference>
<dbReference type="Gene3D" id="2.40.30.10">
    <property type="entry name" value="Translation factors"/>
    <property type="match status" value="1"/>
</dbReference>
<dbReference type="HAMAP" id="MF_01325_B">
    <property type="entry name" value="Ribosomal_uL3_B"/>
    <property type="match status" value="1"/>
</dbReference>
<dbReference type="InterPro" id="IPR000597">
    <property type="entry name" value="Ribosomal_uL3"/>
</dbReference>
<dbReference type="InterPro" id="IPR019927">
    <property type="entry name" value="Ribosomal_uL3_bac/org-type"/>
</dbReference>
<dbReference type="InterPro" id="IPR019926">
    <property type="entry name" value="Ribosomal_uL3_CS"/>
</dbReference>
<dbReference type="InterPro" id="IPR009000">
    <property type="entry name" value="Transl_B-barrel_sf"/>
</dbReference>
<dbReference type="NCBIfam" id="TIGR03625">
    <property type="entry name" value="L3_bact"/>
    <property type="match status" value="1"/>
</dbReference>
<dbReference type="PANTHER" id="PTHR11229">
    <property type="entry name" value="50S RIBOSOMAL PROTEIN L3"/>
    <property type="match status" value="1"/>
</dbReference>
<dbReference type="PANTHER" id="PTHR11229:SF16">
    <property type="entry name" value="LARGE RIBOSOMAL SUBUNIT PROTEIN UL3C"/>
    <property type="match status" value="1"/>
</dbReference>
<dbReference type="Pfam" id="PF00297">
    <property type="entry name" value="Ribosomal_L3"/>
    <property type="match status" value="1"/>
</dbReference>
<dbReference type="SUPFAM" id="SSF50447">
    <property type="entry name" value="Translation proteins"/>
    <property type="match status" value="1"/>
</dbReference>
<dbReference type="PROSITE" id="PS00474">
    <property type="entry name" value="RIBOSOMAL_L3"/>
    <property type="match status" value="1"/>
</dbReference>
<organism>
    <name type="scientific">Bifidobacterium longum (strain DJO10A)</name>
    <dbReference type="NCBI Taxonomy" id="205913"/>
    <lineage>
        <taxon>Bacteria</taxon>
        <taxon>Bacillati</taxon>
        <taxon>Actinomycetota</taxon>
        <taxon>Actinomycetes</taxon>
        <taxon>Bifidobacteriales</taxon>
        <taxon>Bifidobacteriaceae</taxon>
        <taxon>Bifidobacterium</taxon>
    </lineage>
</organism>